<accession>B2TUD4</accession>
<proteinExistence type="inferred from homology"/>
<protein>
    <recommendedName>
        <fullName evidence="1">Dihydroorotate dehydrogenase (quinone)</fullName>
        <ecNumber evidence="1">1.3.5.2</ecNumber>
    </recommendedName>
    <alternativeName>
        <fullName evidence="1">DHOdehase</fullName>
        <shortName evidence="1">DHOD</shortName>
        <shortName evidence="1">DHODase</shortName>
    </alternativeName>
    <alternativeName>
        <fullName evidence="1">Dihydroorotate oxidase</fullName>
    </alternativeName>
</protein>
<reference key="1">
    <citation type="submission" date="2008-05" db="EMBL/GenBank/DDBJ databases">
        <title>Complete sequence of Shigella boydii serotype 18 strain BS512.</title>
        <authorList>
            <person name="Rasko D.A."/>
            <person name="Rosovitz M."/>
            <person name="Maurelli A.T."/>
            <person name="Myers G."/>
            <person name="Seshadri R."/>
            <person name="Cer R."/>
            <person name="Jiang L."/>
            <person name="Ravel J."/>
            <person name="Sebastian Y."/>
        </authorList>
    </citation>
    <scope>NUCLEOTIDE SEQUENCE [LARGE SCALE GENOMIC DNA]</scope>
    <source>
        <strain>CDC 3083-94 / BS512</strain>
    </source>
</reference>
<keyword id="KW-1003">Cell membrane</keyword>
<keyword id="KW-0285">Flavoprotein</keyword>
<keyword id="KW-0288">FMN</keyword>
<keyword id="KW-0472">Membrane</keyword>
<keyword id="KW-0560">Oxidoreductase</keyword>
<keyword id="KW-0665">Pyrimidine biosynthesis</keyword>
<keyword id="KW-1185">Reference proteome</keyword>
<name>PYRD_SHIB3</name>
<feature type="chain" id="PRO_1000100290" description="Dihydroorotate dehydrogenase (quinone)">
    <location>
        <begin position="1"/>
        <end position="336"/>
    </location>
</feature>
<feature type="active site" description="Nucleophile" evidence="1">
    <location>
        <position position="175"/>
    </location>
</feature>
<feature type="binding site" evidence="1">
    <location>
        <begin position="62"/>
        <end position="66"/>
    </location>
    <ligand>
        <name>FMN</name>
        <dbReference type="ChEBI" id="CHEBI:58210"/>
    </ligand>
</feature>
<feature type="binding site" evidence="1">
    <location>
        <position position="66"/>
    </location>
    <ligand>
        <name>substrate</name>
    </ligand>
</feature>
<feature type="binding site" evidence="1">
    <location>
        <position position="86"/>
    </location>
    <ligand>
        <name>FMN</name>
        <dbReference type="ChEBI" id="CHEBI:58210"/>
    </ligand>
</feature>
<feature type="binding site" evidence="1">
    <location>
        <begin position="111"/>
        <end position="115"/>
    </location>
    <ligand>
        <name>substrate</name>
    </ligand>
</feature>
<feature type="binding site" evidence="1">
    <location>
        <position position="139"/>
    </location>
    <ligand>
        <name>FMN</name>
        <dbReference type="ChEBI" id="CHEBI:58210"/>
    </ligand>
</feature>
<feature type="binding site" evidence="1">
    <location>
        <position position="172"/>
    </location>
    <ligand>
        <name>FMN</name>
        <dbReference type="ChEBI" id="CHEBI:58210"/>
    </ligand>
</feature>
<feature type="binding site" evidence="1">
    <location>
        <position position="172"/>
    </location>
    <ligand>
        <name>substrate</name>
    </ligand>
</feature>
<feature type="binding site" evidence="1">
    <location>
        <position position="177"/>
    </location>
    <ligand>
        <name>substrate</name>
    </ligand>
</feature>
<feature type="binding site" evidence="1">
    <location>
        <position position="217"/>
    </location>
    <ligand>
        <name>FMN</name>
        <dbReference type="ChEBI" id="CHEBI:58210"/>
    </ligand>
</feature>
<feature type="binding site" evidence="1">
    <location>
        <position position="245"/>
    </location>
    <ligand>
        <name>FMN</name>
        <dbReference type="ChEBI" id="CHEBI:58210"/>
    </ligand>
</feature>
<feature type="binding site" evidence="1">
    <location>
        <begin position="246"/>
        <end position="247"/>
    </location>
    <ligand>
        <name>substrate</name>
    </ligand>
</feature>
<feature type="binding site" evidence="1">
    <location>
        <position position="268"/>
    </location>
    <ligand>
        <name>FMN</name>
        <dbReference type="ChEBI" id="CHEBI:58210"/>
    </ligand>
</feature>
<feature type="binding site" evidence="1">
    <location>
        <position position="297"/>
    </location>
    <ligand>
        <name>FMN</name>
        <dbReference type="ChEBI" id="CHEBI:58210"/>
    </ligand>
</feature>
<feature type="binding site" evidence="1">
    <location>
        <begin position="318"/>
        <end position="319"/>
    </location>
    <ligand>
        <name>FMN</name>
        <dbReference type="ChEBI" id="CHEBI:58210"/>
    </ligand>
</feature>
<sequence>MYYPFVRKALFQLDPERAHEFTFQQLRRITGTPFEALVRQKVPAKPVNCMGLTFKNPLGLAAGLDKDGECIDALGAMGFGSIEIGTVTPRPQPGNDKPRLFRLVDAEGLINRMGFNNLGVDNLVENVKKAHYDGVLGINIGKNKDTPVEQGKDDYLICMEKIYAYAGYIAINISSPNTPGLRTLQYGEALDDLLTAIKNKQNDLQAMHHKYVPIAVKIAPDLSEEELIQVADSLVRHNIDGVIATNTTLDRSLVQGMKNCDQTGGLSGRPLQLKSTEIIRRLSLELNGRLPIIGVGGIDSVIAAREKIAAGASLVQIYSGFIFKGPPLIKEIVTHI</sequence>
<dbReference type="EC" id="1.3.5.2" evidence="1"/>
<dbReference type="EMBL" id="CP001063">
    <property type="protein sequence ID" value="ACD08661.1"/>
    <property type="molecule type" value="Genomic_DNA"/>
</dbReference>
<dbReference type="RefSeq" id="WP_001295352.1">
    <property type="nucleotide sequence ID" value="NC_010658.1"/>
</dbReference>
<dbReference type="SMR" id="B2TUD4"/>
<dbReference type="STRING" id="344609.SbBS512_E2372"/>
<dbReference type="GeneID" id="93776469"/>
<dbReference type="KEGG" id="sbc:SbBS512_E2372"/>
<dbReference type="HOGENOM" id="CLU_013640_2_0_6"/>
<dbReference type="UniPathway" id="UPA00070">
    <property type="reaction ID" value="UER00946"/>
</dbReference>
<dbReference type="Proteomes" id="UP000001030">
    <property type="component" value="Chromosome"/>
</dbReference>
<dbReference type="GO" id="GO:0005737">
    <property type="term" value="C:cytoplasm"/>
    <property type="evidence" value="ECO:0007669"/>
    <property type="project" value="InterPro"/>
</dbReference>
<dbReference type="GO" id="GO:0005886">
    <property type="term" value="C:plasma membrane"/>
    <property type="evidence" value="ECO:0007669"/>
    <property type="project" value="UniProtKB-SubCell"/>
</dbReference>
<dbReference type="GO" id="GO:0106430">
    <property type="term" value="F:dihydroorotate dehydrogenase (quinone) activity"/>
    <property type="evidence" value="ECO:0007669"/>
    <property type="project" value="UniProtKB-EC"/>
</dbReference>
<dbReference type="GO" id="GO:0006207">
    <property type="term" value="P:'de novo' pyrimidine nucleobase biosynthetic process"/>
    <property type="evidence" value="ECO:0007669"/>
    <property type="project" value="InterPro"/>
</dbReference>
<dbReference type="GO" id="GO:0044205">
    <property type="term" value="P:'de novo' UMP biosynthetic process"/>
    <property type="evidence" value="ECO:0007669"/>
    <property type="project" value="UniProtKB-UniRule"/>
</dbReference>
<dbReference type="CDD" id="cd04738">
    <property type="entry name" value="DHOD_2_like"/>
    <property type="match status" value="1"/>
</dbReference>
<dbReference type="FunFam" id="3.20.20.70:FF:000028">
    <property type="entry name" value="Dihydroorotate dehydrogenase (quinone)"/>
    <property type="match status" value="1"/>
</dbReference>
<dbReference type="Gene3D" id="3.20.20.70">
    <property type="entry name" value="Aldolase class I"/>
    <property type="match status" value="1"/>
</dbReference>
<dbReference type="HAMAP" id="MF_00225">
    <property type="entry name" value="DHO_dh_type2"/>
    <property type="match status" value="1"/>
</dbReference>
<dbReference type="InterPro" id="IPR013785">
    <property type="entry name" value="Aldolase_TIM"/>
</dbReference>
<dbReference type="InterPro" id="IPR050074">
    <property type="entry name" value="DHO_dehydrogenase"/>
</dbReference>
<dbReference type="InterPro" id="IPR012135">
    <property type="entry name" value="Dihydroorotate_DH_1_2"/>
</dbReference>
<dbReference type="InterPro" id="IPR005719">
    <property type="entry name" value="Dihydroorotate_DH_2"/>
</dbReference>
<dbReference type="InterPro" id="IPR005720">
    <property type="entry name" value="Dihydroorotate_DH_cat"/>
</dbReference>
<dbReference type="InterPro" id="IPR001295">
    <property type="entry name" value="Dihydroorotate_DH_CS"/>
</dbReference>
<dbReference type="NCBIfam" id="NF003644">
    <property type="entry name" value="PRK05286.1-1"/>
    <property type="match status" value="1"/>
</dbReference>
<dbReference type="NCBIfam" id="NF003645">
    <property type="entry name" value="PRK05286.1-2"/>
    <property type="match status" value="1"/>
</dbReference>
<dbReference type="NCBIfam" id="NF003646">
    <property type="entry name" value="PRK05286.1-4"/>
    <property type="match status" value="1"/>
</dbReference>
<dbReference type="NCBIfam" id="NF003652">
    <property type="entry name" value="PRK05286.2-5"/>
    <property type="match status" value="1"/>
</dbReference>
<dbReference type="NCBIfam" id="TIGR01036">
    <property type="entry name" value="pyrD_sub2"/>
    <property type="match status" value="1"/>
</dbReference>
<dbReference type="PANTHER" id="PTHR48109:SF4">
    <property type="entry name" value="DIHYDROOROTATE DEHYDROGENASE (QUINONE), MITOCHONDRIAL"/>
    <property type="match status" value="1"/>
</dbReference>
<dbReference type="PANTHER" id="PTHR48109">
    <property type="entry name" value="DIHYDROOROTATE DEHYDROGENASE (QUINONE), MITOCHONDRIAL-RELATED"/>
    <property type="match status" value="1"/>
</dbReference>
<dbReference type="Pfam" id="PF01180">
    <property type="entry name" value="DHO_dh"/>
    <property type="match status" value="1"/>
</dbReference>
<dbReference type="PIRSF" id="PIRSF000164">
    <property type="entry name" value="DHO_oxidase"/>
    <property type="match status" value="1"/>
</dbReference>
<dbReference type="SUPFAM" id="SSF51395">
    <property type="entry name" value="FMN-linked oxidoreductases"/>
    <property type="match status" value="1"/>
</dbReference>
<dbReference type="PROSITE" id="PS00911">
    <property type="entry name" value="DHODEHASE_1"/>
    <property type="match status" value="1"/>
</dbReference>
<dbReference type="PROSITE" id="PS00912">
    <property type="entry name" value="DHODEHASE_2"/>
    <property type="match status" value="1"/>
</dbReference>
<gene>
    <name evidence="1" type="primary">pyrD</name>
    <name type="ordered locus">SbBS512_E2372</name>
</gene>
<evidence type="ECO:0000255" key="1">
    <source>
        <dbReference type="HAMAP-Rule" id="MF_00225"/>
    </source>
</evidence>
<organism>
    <name type="scientific">Shigella boydii serotype 18 (strain CDC 3083-94 / BS512)</name>
    <dbReference type="NCBI Taxonomy" id="344609"/>
    <lineage>
        <taxon>Bacteria</taxon>
        <taxon>Pseudomonadati</taxon>
        <taxon>Pseudomonadota</taxon>
        <taxon>Gammaproteobacteria</taxon>
        <taxon>Enterobacterales</taxon>
        <taxon>Enterobacteriaceae</taxon>
        <taxon>Shigella</taxon>
    </lineage>
</organism>
<comment type="function">
    <text evidence="1">Catalyzes the conversion of dihydroorotate to orotate with quinone as electron acceptor.</text>
</comment>
<comment type="catalytic activity">
    <reaction evidence="1">
        <text>(S)-dihydroorotate + a quinone = orotate + a quinol</text>
        <dbReference type="Rhea" id="RHEA:30187"/>
        <dbReference type="ChEBI" id="CHEBI:24646"/>
        <dbReference type="ChEBI" id="CHEBI:30839"/>
        <dbReference type="ChEBI" id="CHEBI:30864"/>
        <dbReference type="ChEBI" id="CHEBI:132124"/>
        <dbReference type="EC" id="1.3.5.2"/>
    </reaction>
</comment>
<comment type="cofactor">
    <cofactor evidence="1">
        <name>FMN</name>
        <dbReference type="ChEBI" id="CHEBI:58210"/>
    </cofactor>
    <text evidence="1">Binds 1 FMN per subunit.</text>
</comment>
<comment type="pathway">
    <text evidence="1">Pyrimidine metabolism; UMP biosynthesis via de novo pathway; orotate from (S)-dihydroorotate (quinone route): step 1/1.</text>
</comment>
<comment type="subunit">
    <text evidence="1">Monomer.</text>
</comment>
<comment type="subcellular location">
    <subcellularLocation>
        <location evidence="1">Cell membrane</location>
        <topology evidence="1">Peripheral membrane protein</topology>
    </subcellularLocation>
</comment>
<comment type="similarity">
    <text evidence="1">Belongs to the dihydroorotate dehydrogenase family. Type 2 subfamily.</text>
</comment>